<accession>Q8REF9</accession>
<organism>
    <name type="scientific">Fusobacterium nucleatum subsp. nucleatum (strain ATCC 25586 / DSM 15643 / BCRC 10681 / CIP 101130 / JCM 8532 / KCTC 2640 / LMG 13131 / VPI 4355)</name>
    <dbReference type="NCBI Taxonomy" id="190304"/>
    <lineage>
        <taxon>Bacteria</taxon>
        <taxon>Fusobacteriati</taxon>
        <taxon>Fusobacteriota</taxon>
        <taxon>Fusobacteriia</taxon>
        <taxon>Fusobacteriales</taxon>
        <taxon>Fusobacteriaceae</taxon>
        <taxon>Fusobacterium</taxon>
    </lineage>
</organism>
<comment type="similarity">
    <text evidence="1">Belongs to the UPF0597 family.</text>
</comment>
<comment type="sequence caution" evidence="2">
    <conflict type="erroneous initiation">
        <sequence resource="EMBL-CDS" id="AAL95343"/>
    </conflict>
</comment>
<evidence type="ECO:0000255" key="1">
    <source>
        <dbReference type="HAMAP-Rule" id="MF_01845"/>
    </source>
</evidence>
<evidence type="ECO:0000305" key="2"/>
<proteinExistence type="inferred from homology"/>
<name>Y1147_FUSNN</name>
<dbReference type="EMBL" id="AE009951">
    <property type="protein sequence ID" value="AAL95343.1"/>
    <property type="status" value="ALT_INIT"/>
    <property type="molecule type" value="Genomic_DNA"/>
</dbReference>
<dbReference type="RefSeq" id="NP_604044.1">
    <property type="nucleotide sequence ID" value="NC_003454.1"/>
</dbReference>
<dbReference type="RefSeq" id="WP_005902828.1">
    <property type="nucleotide sequence ID" value="NZ_OZ209243.1"/>
</dbReference>
<dbReference type="SMR" id="Q8REF9"/>
<dbReference type="STRING" id="190304.FN1147"/>
<dbReference type="PaxDb" id="190304-FN1147"/>
<dbReference type="EnsemblBacteria" id="AAL95343">
    <property type="protein sequence ID" value="AAL95343"/>
    <property type="gene ID" value="FN1147"/>
</dbReference>
<dbReference type="KEGG" id="fnu:FN1147"/>
<dbReference type="PATRIC" id="fig|190304.8.peg.1712"/>
<dbReference type="eggNOG" id="COG3681">
    <property type="taxonomic scope" value="Bacteria"/>
</dbReference>
<dbReference type="HOGENOM" id="CLU_051840_0_0_0"/>
<dbReference type="InParanoid" id="Q8REF9"/>
<dbReference type="Proteomes" id="UP000002521">
    <property type="component" value="Chromosome"/>
</dbReference>
<dbReference type="GO" id="GO:0080146">
    <property type="term" value="F:L-cysteine desulfhydrase activity"/>
    <property type="evidence" value="ECO:0000318"/>
    <property type="project" value="GO_Central"/>
</dbReference>
<dbReference type="GO" id="GO:0019450">
    <property type="term" value="P:L-cysteine catabolic process to pyruvate"/>
    <property type="evidence" value="ECO:0000318"/>
    <property type="project" value="GO_Central"/>
</dbReference>
<dbReference type="HAMAP" id="MF_01845">
    <property type="entry name" value="UPF0597"/>
    <property type="match status" value="1"/>
</dbReference>
<dbReference type="InterPro" id="IPR005130">
    <property type="entry name" value="Ser_deHydtase-like_asu"/>
</dbReference>
<dbReference type="InterPro" id="IPR021144">
    <property type="entry name" value="UPF0597"/>
</dbReference>
<dbReference type="PANTHER" id="PTHR30501">
    <property type="entry name" value="UPF0597 PROTEIN YHAM"/>
    <property type="match status" value="1"/>
</dbReference>
<dbReference type="PANTHER" id="PTHR30501:SF2">
    <property type="entry name" value="UPF0597 PROTEIN YHAM"/>
    <property type="match status" value="1"/>
</dbReference>
<dbReference type="Pfam" id="PF03313">
    <property type="entry name" value="SDH_alpha"/>
    <property type="match status" value="1"/>
</dbReference>
<dbReference type="PIRSF" id="PIRSF006054">
    <property type="entry name" value="UCP006054"/>
    <property type="match status" value="1"/>
</dbReference>
<gene>
    <name type="ordered locus">FN1147</name>
</gene>
<protein>
    <recommendedName>
        <fullName evidence="1">UPF0597 protein FN1147</fullName>
    </recommendedName>
</protein>
<reference key="1">
    <citation type="journal article" date="2002" name="J. Bacteriol.">
        <title>Genome sequence and analysis of the oral bacterium Fusobacterium nucleatum strain ATCC 25586.</title>
        <authorList>
            <person name="Kapatral V."/>
            <person name="Anderson I."/>
            <person name="Ivanova N."/>
            <person name="Reznik G."/>
            <person name="Los T."/>
            <person name="Lykidis A."/>
            <person name="Bhattacharyya A."/>
            <person name="Bartman A."/>
            <person name="Gardner W."/>
            <person name="Grechkin G."/>
            <person name="Zhu L."/>
            <person name="Vasieva O."/>
            <person name="Chu L."/>
            <person name="Kogan Y."/>
            <person name="Chaga O."/>
            <person name="Goltsman E."/>
            <person name="Bernal A."/>
            <person name="Larsen N."/>
            <person name="D'Souza M."/>
            <person name="Walunas T."/>
            <person name="Pusch G."/>
            <person name="Haselkorn R."/>
            <person name="Fonstein M."/>
            <person name="Kyrpides N.C."/>
            <person name="Overbeek R."/>
        </authorList>
    </citation>
    <scope>NUCLEOTIDE SEQUENCE [LARGE SCALE GENOMIC DNA]</scope>
    <source>
        <strain>ATCC 25586 / DSM 15643 / BCRC 10681 / CIP 101130 / JCM 8532 / KCTC 2640 / LMG 13131 / VPI 4355</strain>
    </source>
</reference>
<feature type="chain" id="PRO_0000339829" description="UPF0597 protein FN1147">
    <location>
        <begin position="1"/>
        <end position="427"/>
    </location>
</feature>
<sequence length="427" mass="45838">METKIEKVLKILEEEIVAAEGCTEPIALSYAAAKARRILGTVPNKVDVFLSGNIIKNVKSVTIPNSEGMIGIEPAIAMGLIAGDDKKELMVISDTTHEQVQEVRDFLDKKLIKTHVYPGDIKLYIRLEISNGENNVLLEIKHTHTNITRILKNDKVLLSQICNDGDFNSSLTDRKVLSVKYIYDLAKTIDIDLIKPIFQKVIRYNSAIADEGLKGKYGVNIGKMILDNIEKGIYGNDVRNKAASYASAGSDARMSGCALPVMTTSGSGNQGMTASLPVIKFAAEKNLSEEELIRGLFVSHLITIHVKTNVGRLSAYCGAICAASGVAAALTFLHGGSFEMVCDAITNILGNLSGVICDGAKASCAMKISSGIYSAFDATMLALNKDVLKSGDGIVGVDIEETIRNVGELAQCGMKGTDETILGIMTK</sequence>
<keyword id="KW-1185">Reference proteome</keyword>